<reference key="1">
    <citation type="submission" date="2005-08" db="EMBL/GenBank/DDBJ databases">
        <title>Complete sequence of chromosome 1 of Synechococcus elongatus PCC 7942.</title>
        <authorList>
            <consortium name="US DOE Joint Genome Institute"/>
            <person name="Copeland A."/>
            <person name="Lucas S."/>
            <person name="Lapidus A."/>
            <person name="Barry K."/>
            <person name="Detter J.C."/>
            <person name="Glavina T."/>
            <person name="Hammon N."/>
            <person name="Israni S."/>
            <person name="Pitluck S."/>
            <person name="Schmutz J."/>
            <person name="Larimer F."/>
            <person name="Land M."/>
            <person name="Kyrpides N."/>
            <person name="Lykidis A."/>
            <person name="Golden S."/>
            <person name="Richardson P."/>
        </authorList>
    </citation>
    <scope>NUCLEOTIDE SEQUENCE [LARGE SCALE GENOMIC DNA]</scope>
    <source>
        <strain>ATCC 33912 / PCC 7942 / FACHB-805</strain>
    </source>
</reference>
<dbReference type="EC" id="2.3.1.274" evidence="1"/>
<dbReference type="EMBL" id="CP000100">
    <property type="protein sequence ID" value="ABB57484.1"/>
    <property type="molecule type" value="Genomic_DNA"/>
</dbReference>
<dbReference type="RefSeq" id="WP_011242416.1">
    <property type="nucleotide sequence ID" value="NZ_JACJTX010000004.1"/>
</dbReference>
<dbReference type="SMR" id="Q31N85"/>
<dbReference type="STRING" id="1140.Synpcc7942_1454"/>
<dbReference type="PaxDb" id="1140-Synpcc7942_1454"/>
<dbReference type="GeneID" id="72430317"/>
<dbReference type="KEGG" id="syf:Synpcc7942_1454"/>
<dbReference type="eggNOG" id="COG0416">
    <property type="taxonomic scope" value="Bacteria"/>
</dbReference>
<dbReference type="HOGENOM" id="CLU_039379_1_1_3"/>
<dbReference type="OrthoDB" id="9806408at2"/>
<dbReference type="BioCyc" id="SYNEL:SYNPCC7942_1454-MONOMER"/>
<dbReference type="UniPathway" id="UPA00085"/>
<dbReference type="Proteomes" id="UP000889800">
    <property type="component" value="Chromosome"/>
</dbReference>
<dbReference type="GO" id="GO:0005737">
    <property type="term" value="C:cytoplasm"/>
    <property type="evidence" value="ECO:0007669"/>
    <property type="project" value="UniProtKB-SubCell"/>
</dbReference>
<dbReference type="GO" id="GO:0043811">
    <property type="term" value="F:phosphate:acyl-[acyl carrier protein] acyltransferase activity"/>
    <property type="evidence" value="ECO:0007669"/>
    <property type="project" value="UniProtKB-UniRule"/>
</dbReference>
<dbReference type="GO" id="GO:0006633">
    <property type="term" value="P:fatty acid biosynthetic process"/>
    <property type="evidence" value="ECO:0007669"/>
    <property type="project" value="UniProtKB-UniRule"/>
</dbReference>
<dbReference type="GO" id="GO:0008654">
    <property type="term" value="P:phospholipid biosynthetic process"/>
    <property type="evidence" value="ECO:0007669"/>
    <property type="project" value="UniProtKB-KW"/>
</dbReference>
<dbReference type="Gene3D" id="3.40.718.10">
    <property type="entry name" value="Isopropylmalate Dehydrogenase"/>
    <property type="match status" value="1"/>
</dbReference>
<dbReference type="HAMAP" id="MF_00019">
    <property type="entry name" value="PlsX"/>
    <property type="match status" value="1"/>
</dbReference>
<dbReference type="InterPro" id="IPR003664">
    <property type="entry name" value="FA_synthesis"/>
</dbReference>
<dbReference type="InterPro" id="IPR012281">
    <property type="entry name" value="Phospholipid_synth_PlsX-like"/>
</dbReference>
<dbReference type="NCBIfam" id="TIGR00182">
    <property type="entry name" value="plsX"/>
    <property type="match status" value="1"/>
</dbReference>
<dbReference type="PANTHER" id="PTHR30100">
    <property type="entry name" value="FATTY ACID/PHOSPHOLIPID SYNTHESIS PROTEIN PLSX"/>
    <property type="match status" value="1"/>
</dbReference>
<dbReference type="PANTHER" id="PTHR30100:SF1">
    <property type="entry name" value="PHOSPHATE ACYLTRANSFERASE"/>
    <property type="match status" value="1"/>
</dbReference>
<dbReference type="Pfam" id="PF02504">
    <property type="entry name" value="FA_synthesis"/>
    <property type="match status" value="1"/>
</dbReference>
<dbReference type="PIRSF" id="PIRSF002465">
    <property type="entry name" value="Phsphlp_syn_PlsX"/>
    <property type="match status" value="1"/>
</dbReference>
<dbReference type="SUPFAM" id="SSF53659">
    <property type="entry name" value="Isocitrate/Isopropylmalate dehydrogenase-like"/>
    <property type="match status" value="1"/>
</dbReference>
<proteinExistence type="inferred from homology"/>
<comment type="function">
    <text evidence="1">Catalyzes the reversible formation of acyl-phosphate (acyl-PO(4)) from acyl-[acyl-carrier-protein] (acyl-ACP). This enzyme utilizes acyl-ACP as fatty acyl donor, but not acyl-CoA.</text>
</comment>
<comment type="catalytic activity">
    <reaction evidence="1">
        <text>a fatty acyl-[ACP] + phosphate = an acyl phosphate + holo-[ACP]</text>
        <dbReference type="Rhea" id="RHEA:42292"/>
        <dbReference type="Rhea" id="RHEA-COMP:9685"/>
        <dbReference type="Rhea" id="RHEA-COMP:14125"/>
        <dbReference type="ChEBI" id="CHEBI:43474"/>
        <dbReference type="ChEBI" id="CHEBI:59918"/>
        <dbReference type="ChEBI" id="CHEBI:64479"/>
        <dbReference type="ChEBI" id="CHEBI:138651"/>
        <dbReference type="EC" id="2.3.1.274"/>
    </reaction>
</comment>
<comment type="pathway">
    <text evidence="1">Lipid metabolism; phospholipid metabolism.</text>
</comment>
<comment type="subunit">
    <text evidence="1">Homodimer. Probably interacts with PlsY.</text>
</comment>
<comment type="subcellular location">
    <subcellularLocation>
        <location evidence="1">Cytoplasm</location>
    </subcellularLocation>
    <text evidence="1">Associated with the membrane possibly through PlsY.</text>
</comment>
<comment type="similarity">
    <text evidence="1">Belongs to the PlsX family.</text>
</comment>
<feature type="chain" id="PRO_1000001853" description="Phosphate acyltransferase">
    <location>
        <begin position="1"/>
        <end position="346"/>
    </location>
</feature>
<organism>
    <name type="scientific">Synechococcus elongatus (strain ATCC 33912 / PCC 7942 / FACHB-805)</name>
    <name type="common">Anacystis nidulans R2</name>
    <dbReference type="NCBI Taxonomy" id="1140"/>
    <lineage>
        <taxon>Bacteria</taxon>
        <taxon>Bacillati</taxon>
        <taxon>Cyanobacteriota</taxon>
        <taxon>Cyanophyceae</taxon>
        <taxon>Synechococcales</taxon>
        <taxon>Synechococcaceae</taxon>
        <taxon>Synechococcus</taxon>
    </lineage>
</organism>
<sequence>MTRARIAVDAMGGDFAPEEIVKGALRAQEELQADVILVGDPDRLRAICQDHAPHLQVRIEAAEEAIAMEDAAVSVRSRPRASINVAMDLVKAGEADAVISAGHSGAVMASALLRLGRIRGIDRPAIGALLPTVIPGKPVLVLDVGANVDCKPRFLEQFAVMGSIYSRDVLGQANPRVGLVNIGEEDSKGNELALASHQLLRNNPRICFVGNAEGRDVLSGQFDVVVCDGFVGNVLLKFAEAVGSVFLEIIRDELPRGMRGKVGSTLLRRNLRRIKQRLDHAEHGGALLLGVNGICIISHGSSKAPSIYSAIRLAVEAAENRVIDHLHQIQEPPSPAADLVTEPVVS</sequence>
<evidence type="ECO:0000255" key="1">
    <source>
        <dbReference type="HAMAP-Rule" id="MF_00019"/>
    </source>
</evidence>
<accession>Q31N85</accession>
<protein>
    <recommendedName>
        <fullName evidence="1">Phosphate acyltransferase</fullName>
        <ecNumber evidence="1">2.3.1.274</ecNumber>
    </recommendedName>
    <alternativeName>
        <fullName evidence="1">Acyl-ACP phosphotransacylase</fullName>
    </alternativeName>
    <alternativeName>
        <fullName evidence="1">Acyl-[acyl-carrier-protein]--phosphate acyltransferase</fullName>
    </alternativeName>
    <alternativeName>
        <fullName evidence="1">Phosphate-acyl-ACP acyltransferase</fullName>
    </alternativeName>
</protein>
<keyword id="KW-0963">Cytoplasm</keyword>
<keyword id="KW-0444">Lipid biosynthesis</keyword>
<keyword id="KW-0443">Lipid metabolism</keyword>
<keyword id="KW-0594">Phospholipid biosynthesis</keyword>
<keyword id="KW-1208">Phospholipid metabolism</keyword>
<keyword id="KW-1185">Reference proteome</keyword>
<keyword id="KW-0808">Transferase</keyword>
<gene>
    <name evidence="1" type="primary">plsX</name>
    <name type="ordered locus">Synpcc7942_1454</name>
</gene>
<name>PLSX_SYNE7</name>